<dbReference type="EMBL" id="CM003140">
    <property type="protein sequence ID" value="KIS71953.1"/>
    <property type="molecule type" value="Genomic_DNA"/>
</dbReference>
<dbReference type="RefSeq" id="XP_011386265.1">
    <property type="nucleotide sequence ID" value="XM_011387963.1"/>
</dbReference>
<dbReference type="SMR" id="Q4PHN4"/>
<dbReference type="FunCoup" id="Q4PHN4">
    <property type="interactions" value="848"/>
</dbReference>
<dbReference type="STRING" id="237631.Q4PHN4"/>
<dbReference type="EnsemblFungi" id="KIS71953">
    <property type="protein sequence ID" value="KIS71953"/>
    <property type="gene ID" value="UMAG_00379"/>
</dbReference>
<dbReference type="GeneID" id="23561698"/>
<dbReference type="KEGG" id="uma:UMAG_00379"/>
<dbReference type="VEuPathDB" id="FungiDB:UMAG_00379"/>
<dbReference type="eggNOG" id="KOG2758">
    <property type="taxonomic scope" value="Eukaryota"/>
</dbReference>
<dbReference type="HOGENOM" id="CLU_031132_0_0_1"/>
<dbReference type="InParanoid" id="Q4PHN4"/>
<dbReference type="OMA" id="NCPWILR"/>
<dbReference type="OrthoDB" id="417252at2759"/>
<dbReference type="Proteomes" id="UP000000561">
    <property type="component" value="Chromosome 1"/>
</dbReference>
<dbReference type="GO" id="GO:0016282">
    <property type="term" value="C:eukaryotic 43S preinitiation complex"/>
    <property type="evidence" value="ECO:0007669"/>
    <property type="project" value="UniProtKB-UniRule"/>
</dbReference>
<dbReference type="GO" id="GO:0033290">
    <property type="term" value="C:eukaryotic 48S preinitiation complex"/>
    <property type="evidence" value="ECO:0007669"/>
    <property type="project" value="UniProtKB-UniRule"/>
</dbReference>
<dbReference type="GO" id="GO:0005852">
    <property type="term" value="C:eukaryotic translation initiation factor 3 complex"/>
    <property type="evidence" value="ECO:0000318"/>
    <property type="project" value="GO_Central"/>
</dbReference>
<dbReference type="GO" id="GO:0071540">
    <property type="term" value="C:eukaryotic translation initiation factor 3 complex, eIF3e"/>
    <property type="evidence" value="ECO:0007669"/>
    <property type="project" value="UniProtKB-UniRule"/>
</dbReference>
<dbReference type="GO" id="GO:0005634">
    <property type="term" value="C:nucleus"/>
    <property type="evidence" value="ECO:0000318"/>
    <property type="project" value="GO_Central"/>
</dbReference>
<dbReference type="GO" id="GO:0003743">
    <property type="term" value="F:translation initiation factor activity"/>
    <property type="evidence" value="ECO:0007669"/>
    <property type="project" value="UniProtKB-UniRule"/>
</dbReference>
<dbReference type="GO" id="GO:0001732">
    <property type="term" value="P:formation of cytoplasmic translation initiation complex"/>
    <property type="evidence" value="ECO:0007669"/>
    <property type="project" value="UniProtKB-UniRule"/>
</dbReference>
<dbReference type="GO" id="GO:0006413">
    <property type="term" value="P:translational initiation"/>
    <property type="evidence" value="ECO:0000318"/>
    <property type="project" value="GO_Central"/>
</dbReference>
<dbReference type="CDD" id="cd21378">
    <property type="entry name" value="eIF3E"/>
    <property type="match status" value="1"/>
</dbReference>
<dbReference type="HAMAP" id="MF_03004">
    <property type="entry name" value="eIF3e"/>
    <property type="match status" value="1"/>
</dbReference>
<dbReference type="InterPro" id="IPR016650">
    <property type="entry name" value="eIF3e"/>
</dbReference>
<dbReference type="InterPro" id="IPR019010">
    <property type="entry name" value="eIF3e_N"/>
</dbReference>
<dbReference type="InterPro" id="IPR000717">
    <property type="entry name" value="PCI_dom"/>
</dbReference>
<dbReference type="InterPro" id="IPR036390">
    <property type="entry name" value="WH_DNA-bd_sf"/>
</dbReference>
<dbReference type="PANTHER" id="PTHR10317">
    <property type="entry name" value="EUKARYOTIC TRANSLATION INITIATION FACTOR 3 SUBUNIT E"/>
    <property type="match status" value="1"/>
</dbReference>
<dbReference type="Pfam" id="PF09440">
    <property type="entry name" value="eIF3_N"/>
    <property type="match status" value="1"/>
</dbReference>
<dbReference type="Pfam" id="PF01399">
    <property type="entry name" value="PCI"/>
    <property type="match status" value="1"/>
</dbReference>
<dbReference type="PIRSF" id="PIRSF016255">
    <property type="entry name" value="eIF3e_su6"/>
    <property type="match status" value="1"/>
</dbReference>
<dbReference type="SMART" id="SM01186">
    <property type="entry name" value="eIF3_N"/>
    <property type="match status" value="1"/>
</dbReference>
<dbReference type="SUPFAM" id="SSF46785">
    <property type="entry name" value="Winged helix' DNA-binding domain"/>
    <property type="match status" value="1"/>
</dbReference>
<dbReference type="PROSITE" id="PS50250">
    <property type="entry name" value="PCI"/>
    <property type="match status" value="1"/>
</dbReference>
<sequence length="541" mass="60520">MAVKYDLTQTLLPYLDRHLGLPLLSHLAGSGIFSETDIAKAQYELAKNTSMVDYALQLYEQAYPNQPAPAEIEKQRENAIALNDKLGSEVDHVLEVIQDPSVASALKQDKAQNLQWLEEKYNLTSEQINALYRYGYFQFSCGNYGDASSYLYHFRVLSTDPVLTMSSHWGKLASDILVGEWEQALSELKLLREQLDSSAAHVTASYAQPSTSNGSSQNDDLTQEGLLKKRAWLLHWALFIFFNHPGGREQLVEMFLSPVYLNTIQTTCWWLLRYVVAALLLSRRTTRVYLVQQPAPATLMASVSGANVNKLSPQQAIKDIVNIIDSESYRIAGTDPIVDFLSKLFVDFDFEAAQEQLTLAEQVASKDFFLADFKDELVEACRVVISEAYCRIHSKVDIADLVKRLNLSKEDGEKWIVNLVRDTRADAKIDFKEGMVFMNPTHPPVYQTIIEKTRGFTFRTSAMGTAIDRKAHPPSLNNTHNLNGNDKRGNAGGRGGRGGQRNQGGQRDRSHAHNNEAKREGESASAEEAQQQQPAQAIAAN</sequence>
<name>EIF3E_MYCMD</name>
<comment type="function">
    <text evidence="1">Component of the eukaryotic translation initiation factor 3 (eIF-3) complex, which is involved in protein synthesis of a specialized repertoire of mRNAs and, together with other initiation factors, stimulates binding of mRNA and methionyl-tRNAi to the 40S ribosome. The eIF-3 complex specifically targets and initiates translation of a subset of mRNAs involved in cell proliferation.</text>
</comment>
<comment type="subunit">
    <text evidence="1">Component of the eukaryotic translation initiation factor 3 (eIF-3) complex.</text>
</comment>
<comment type="subcellular location">
    <subcellularLocation>
        <location evidence="1">Cytoplasm</location>
    </subcellularLocation>
</comment>
<comment type="similarity">
    <text evidence="1">Belongs to the eIF-3 subunit E family.</text>
</comment>
<reference key="1">
    <citation type="journal article" date="2006" name="Nature">
        <title>Insights from the genome of the biotrophic fungal plant pathogen Ustilago maydis.</title>
        <authorList>
            <person name="Kaemper J."/>
            <person name="Kahmann R."/>
            <person name="Boelker M."/>
            <person name="Ma L.-J."/>
            <person name="Brefort T."/>
            <person name="Saville B.J."/>
            <person name="Banuett F."/>
            <person name="Kronstad J.W."/>
            <person name="Gold S.E."/>
            <person name="Mueller O."/>
            <person name="Perlin M.H."/>
            <person name="Woesten H.A.B."/>
            <person name="de Vries R."/>
            <person name="Ruiz-Herrera J."/>
            <person name="Reynaga-Pena C.G."/>
            <person name="Snetselaar K."/>
            <person name="McCann M."/>
            <person name="Perez-Martin J."/>
            <person name="Feldbruegge M."/>
            <person name="Basse C.W."/>
            <person name="Steinberg G."/>
            <person name="Ibeas J.I."/>
            <person name="Holloman W."/>
            <person name="Guzman P."/>
            <person name="Farman M.L."/>
            <person name="Stajich J.E."/>
            <person name="Sentandreu R."/>
            <person name="Gonzalez-Prieto J.M."/>
            <person name="Kennell J.C."/>
            <person name="Molina L."/>
            <person name="Schirawski J."/>
            <person name="Mendoza-Mendoza A."/>
            <person name="Greilinger D."/>
            <person name="Muench K."/>
            <person name="Roessel N."/>
            <person name="Scherer M."/>
            <person name="Vranes M."/>
            <person name="Ladendorf O."/>
            <person name="Vincon V."/>
            <person name="Fuchs U."/>
            <person name="Sandrock B."/>
            <person name="Meng S."/>
            <person name="Ho E.C.H."/>
            <person name="Cahill M.J."/>
            <person name="Boyce K.J."/>
            <person name="Klose J."/>
            <person name="Klosterman S.J."/>
            <person name="Deelstra H.J."/>
            <person name="Ortiz-Castellanos L."/>
            <person name="Li W."/>
            <person name="Sanchez-Alonso P."/>
            <person name="Schreier P.H."/>
            <person name="Haeuser-Hahn I."/>
            <person name="Vaupel M."/>
            <person name="Koopmann E."/>
            <person name="Friedrich G."/>
            <person name="Voss H."/>
            <person name="Schlueter T."/>
            <person name="Margolis J."/>
            <person name="Platt D."/>
            <person name="Swimmer C."/>
            <person name="Gnirke A."/>
            <person name="Chen F."/>
            <person name="Vysotskaia V."/>
            <person name="Mannhaupt G."/>
            <person name="Gueldener U."/>
            <person name="Muensterkoetter M."/>
            <person name="Haase D."/>
            <person name="Oesterheld M."/>
            <person name="Mewes H.-W."/>
            <person name="Mauceli E.W."/>
            <person name="DeCaprio D."/>
            <person name="Wade C.M."/>
            <person name="Butler J."/>
            <person name="Young S.K."/>
            <person name="Jaffe D.B."/>
            <person name="Calvo S.E."/>
            <person name="Nusbaum C."/>
            <person name="Galagan J.E."/>
            <person name="Birren B.W."/>
        </authorList>
    </citation>
    <scope>NUCLEOTIDE SEQUENCE [LARGE SCALE GENOMIC DNA]</scope>
    <source>
        <strain>DSM 14603 / FGSC 9021 / UM521</strain>
    </source>
</reference>
<reference key="2">
    <citation type="submission" date="2014-09" db="EMBL/GenBank/DDBJ databases">
        <authorList>
            <person name="Gueldener U."/>
            <person name="Muensterkoetter M."/>
            <person name="Walter M.C."/>
            <person name="Mannhaupt G."/>
            <person name="Kahmann R."/>
        </authorList>
    </citation>
    <scope>GENOME REANNOTATION</scope>
    <source>
        <strain>DSM 14603 / FGSC 9021 / UM521</strain>
    </source>
</reference>
<evidence type="ECO:0000255" key="1">
    <source>
        <dbReference type="HAMAP-Rule" id="MF_03004"/>
    </source>
</evidence>
<evidence type="ECO:0000255" key="2">
    <source>
        <dbReference type="PROSITE-ProRule" id="PRU01185"/>
    </source>
</evidence>
<evidence type="ECO:0000256" key="3">
    <source>
        <dbReference type="SAM" id="MobiDB-lite"/>
    </source>
</evidence>
<feature type="chain" id="PRO_0000365992" description="Eukaryotic translation initiation factor 3 subunit E">
    <location>
        <begin position="1"/>
        <end position="541"/>
    </location>
</feature>
<feature type="domain" description="PCI" evidence="2">
    <location>
        <begin position="252"/>
        <end position="443"/>
    </location>
</feature>
<feature type="region of interest" description="Disordered" evidence="3">
    <location>
        <begin position="466"/>
        <end position="541"/>
    </location>
</feature>
<feature type="compositionally biased region" description="Gly residues" evidence="3">
    <location>
        <begin position="490"/>
        <end position="502"/>
    </location>
</feature>
<feature type="compositionally biased region" description="Basic and acidic residues" evidence="3">
    <location>
        <begin position="506"/>
        <end position="522"/>
    </location>
</feature>
<feature type="compositionally biased region" description="Low complexity" evidence="3">
    <location>
        <begin position="523"/>
        <end position="541"/>
    </location>
</feature>
<accession>Q4PHN4</accession>
<accession>A0A0D1D0G4</accession>
<organism>
    <name type="scientific">Mycosarcoma maydis</name>
    <name type="common">Corn smut fungus</name>
    <name type="synonym">Ustilago maydis</name>
    <dbReference type="NCBI Taxonomy" id="5270"/>
    <lineage>
        <taxon>Eukaryota</taxon>
        <taxon>Fungi</taxon>
        <taxon>Dikarya</taxon>
        <taxon>Basidiomycota</taxon>
        <taxon>Ustilaginomycotina</taxon>
        <taxon>Ustilaginomycetes</taxon>
        <taxon>Ustilaginales</taxon>
        <taxon>Ustilaginaceae</taxon>
        <taxon>Mycosarcoma</taxon>
    </lineage>
</organism>
<keyword id="KW-0963">Cytoplasm</keyword>
<keyword id="KW-0396">Initiation factor</keyword>
<keyword id="KW-0648">Protein biosynthesis</keyword>
<keyword id="KW-1185">Reference proteome</keyword>
<protein>
    <recommendedName>
        <fullName evidence="1">Eukaryotic translation initiation factor 3 subunit E</fullName>
        <shortName evidence="1">eIF3e</shortName>
    </recommendedName>
</protein>
<gene>
    <name evidence="1" type="primary">INT6</name>
    <name type="ORF">UMAG_00379</name>
</gene>
<proteinExistence type="inferred from homology"/>